<comment type="function">
    <text evidence="1">Together with the chaperonin GroEL, plays an essential role in assisting protein folding. The GroEL-GroES system forms a nano-cage that allows encapsulation of the non-native substrate proteins and provides a physical environment optimized to promote and accelerate protein folding. GroES binds to the apical surface of the GroEL ring, thereby capping the opening of the GroEL channel.</text>
</comment>
<comment type="subunit">
    <text evidence="1">Heptamer of 7 subunits arranged in a ring. Interacts with the chaperonin GroEL.</text>
</comment>
<comment type="subcellular location">
    <subcellularLocation>
        <location evidence="1">Cytoplasm</location>
    </subcellularLocation>
</comment>
<comment type="similarity">
    <text evidence="1">Belongs to the GroES chaperonin family.</text>
</comment>
<reference key="1">
    <citation type="journal article" date="2007" name="Genome Res.">
        <title>Genome sequence of a proteolytic (Group I) Clostridium botulinum strain Hall A and comparative analysis of the clostridial genomes.</title>
        <authorList>
            <person name="Sebaihia M."/>
            <person name="Peck M.W."/>
            <person name="Minton N.P."/>
            <person name="Thomson N.R."/>
            <person name="Holden M.T.G."/>
            <person name="Mitchell W.J."/>
            <person name="Carter A.T."/>
            <person name="Bentley S.D."/>
            <person name="Mason D.R."/>
            <person name="Crossman L."/>
            <person name="Paul C.J."/>
            <person name="Ivens A."/>
            <person name="Wells-Bennik M.H.J."/>
            <person name="Davis I.J."/>
            <person name="Cerdeno-Tarraga A.M."/>
            <person name="Churcher C."/>
            <person name="Quail M.A."/>
            <person name="Chillingworth T."/>
            <person name="Feltwell T."/>
            <person name="Fraser A."/>
            <person name="Goodhead I."/>
            <person name="Hance Z."/>
            <person name="Jagels K."/>
            <person name="Larke N."/>
            <person name="Maddison M."/>
            <person name="Moule S."/>
            <person name="Mungall K."/>
            <person name="Norbertczak H."/>
            <person name="Rabbinowitsch E."/>
            <person name="Sanders M."/>
            <person name="Simmonds M."/>
            <person name="White B."/>
            <person name="Whithead S."/>
            <person name="Parkhill J."/>
        </authorList>
    </citation>
    <scope>NUCLEOTIDE SEQUENCE [LARGE SCALE GENOMIC DNA]</scope>
    <source>
        <strain>Hall / ATCC 3502 / NCTC 13319 / Type A</strain>
    </source>
</reference>
<reference key="2">
    <citation type="journal article" date="2007" name="PLoS ONE">
        <title>Analysis of the neurotoxin complex genes in Clostridium botulinum A1-A4 and B1 strains: BoNT/A3, /Ba4 and /B1 clusters are located within plasmids.</title>
        <authorList>
            <person name="Smith T.J."/>
            <person name="Hill K.K."/>
            <person name="Foley B.T."/>
            <person name="Detter J.C."/>
            <person name="Munk A.C."/>
            <person name="Bruce D.C."/>
            <person name="Doggett N.A."/>
            <person name="Smith L.A."/>
            <person name="Marks J.D."/>
            <person name="Xie G."/>
            <person name="Brettin T.S."/>
        </authorList>
    </citation>
    <scope>NUCLEOTIDE SEQUENCE [LARGE SCALE GENOMIC DNA]</scope>
    <source>
        <strain>Hall / ATCC 3502 / NCTC 13319 / Type A</strain>
    </source>
</reference>
<protein>
    <recommendedName>
        <fullName evidence="1">Co-chaperonin GroES</fullName>
    </recommendedName>
    <alternativeName>
        <fullName evidence="1">10 kDa chaperonin</fullName>
    </alternativeName>
    <alternativeName>
        <fullName evidence="1">Chaperonin-10</fullName>
        <shortName evidence="1">Cpn10</shortName>
    </alternativeName>
</protein>
<gene>
    <name evidence="1" type="primary">groES</name>
    <name evidence="1" type="synonym">groS</name>
    <name type="ordered locus">CBO3299</name>
    <name type="ordered locus">CLC_3241</name>
</gene>
<dbReference type="EMBL" id="CP000727">
    <property type="protein sequence ID" value="ABS36800.1"/>
    <property type="molecule type" value="Genomic_DNA"/>
</dbReference>
<dbReference type="EMBL" id="AM412317">
    <property type="protein sequence ID" value="CAL84857.1"/>
    <property type="molecule type" value="Genomic_DNA"/>
</dbReference>
<dbReference type="RefSeq" id="WP_003357350.1">
    <property type="nucleotide sequence ID" value="NC_009698.1"/>
</dbReference>
<dbReference type="RefSeq" id="YP_001255783.1">
    <property type="nucleotide sequence ID" value="NC_009495.1"/>
</dbReference>
<dbReference type="RefSeq" id="YP_001389023.1">
    <property type="nucleotide sequence ID" value="NC_009698.1"/>
</dbReference>
<dbReference type="SMR" id="A5I724"/>
<dbReference type="GeneID" id="5187556"/>
<dbReference type="KEGG" id="cbh:CLC_3241"/>
<dbReference type="KEGG" id="cbo:CBO3299"/>
<dbReference type="PATRIC" id="fig|413999.7.peg.3275"/>
<dbReference type="HOGENOM" id="CLU_132825_2_0_9"/>
<dbReference type="PRO" id="PR:A5I724"/>
<dbReference type="Proteomes" id="UP000001986">
    <property type="component" value="Chromosome"/>
</dbReference>
<dbReference type="GO" id="GO:0005737">
    <property type="term" value="C:cytoplasm"/>
    <property type="evidence" value="ECO:0007669"/>
    <property type="project" value="UniProtKB-SubCell"/>
</dbReference>
<dbReference type="GO" id="GO:0005524">
    <property type="term" value="F:ATP binding"/>
    <property type="evidence" value="ECO:0007669"/>
    <property type="project" value="InterPro"/>
</dbReference>
<dbReference type="GO" id="GO:0046872">
    <property type="term" value="F:metal ion binding"/>
    <property type="evidence" value="ECO:0000318"/>
    <property type="project" value="GO_Central"/>
</dbReference>
<dbReference type="GO" id="GO:0044183">
    <property type="term" value="F:protein folding chaperone"/>
    <property type="evidence" value="ECO:0007669"/>
    <property type="project" value="InterPro"/>
</dbReference>
<dbReference type="GO" id="GO:0051087">
    <property type="term" value="F:protein-folding chaperone binding"/>
    <property type="evidence" value="ECO:0000318"/>
    <property type="project" value="GO_Central"/>
</dbReference>
<dbReference type="GO" id="GO:0051082">
    <property type="term" value="F:unfolded protein binding"/>
    <property type="evidence" value="ECO:0000318"/>
    <property type="project" value="GO_Central"/>
</dbReference>
<dbReference type="GO" id="GO:0051085">
    <property type="term" value="P:chaperone cofactor-dependent protein refolding"/>
    <property type="evidence" value="ECO:0000318"/>
    <property type="project" value="GO_Central"/>
</dbReference>
<dbReference type="CDD" id="cd00320">
    <property type="entry name" value="cpn10"/>
    <property type="match status" value="1"/>
</dbReference>
<dbReference type="FunFam" id="2.30.33.40:FF:000001">
    <property type="entry name" value="10 kDa chaperonin"/>
    <property type="match status" value="1"/>
</dbReference>
<dbReference type="Gene3D" id="2.30.33.40">
    <property type="entry name" value="GroES chaperonin"/>
    <property type="match status" value="1"/>
</dbReference>
<dbReference type="HAMAP" id="MF_00580">
    <property type="entry name" value="CH10"/>
    <property type="match status" value="1"/>
</dbReference>
<dbReference type="InterPro" id="IPR020818">
    <property type="entry name" value="Chaperonin_GroES"/>
</dbReference>
<dbReference type="InterPro" id="IPR037124">
    <property type="entry name" value="Chaperonin_GroES_sf"/>
</dbReference>
<dbReference type="InterPro" id="IPR018369">
    <property type="entry name" value="Chaprnonin_Cpn10_CS"/>
</dbReference>
<dbReference type="InterPro" id="IPR011032">
    <property type="entry name" value="GroES-like_sf"/>
</dbReference>
<dbReference type="NCBIfam" id="NF001527">
    <property type="entry name" value="PRK00364.1-2"/>
    <property type="match status" value="1"/>
</dbReference>
<dbReference type="NCBIfam" id="NF001531">
    <property type="entry name" value="PRK00364.2-2"/>
    <property type="match status" value="1"/>
</dbReference>
<dbReference type="NCBIfam" id="NF001533">
    <property type="entry name" value="PRK00364.2-4"/>
    <property type="match status" value="1"/>
</dbReference>
<dbReference type="PANTHER" id="PTHR10772">
    <property type="entry name" value="10 KDA HEAT SHOCK PROTEIN"/>
    <property type="match status" value="1"/>
</dbReference>
<dbReference type="PANTHER" id="PTHR10772:SF58">
    <property type="entry name" value="CO-CHAPERONIN GROES"/>
    <property type="match status" value="1"/>
</dbReference>
<dbReference type="Pfam" id="PF00166">
    <property type="entry name" value="Cpn10"/>
    <property type="match status" value="1"/>
</dbReference>
<dbReference type="PRINTS" id="PR00297">
    <property type="entry name" value="CHAPERONIN10"/>
</dbReference>
<dbReference type="SMART" id="SM00883">
    <property type="entry name" value="Cpn10"/>
    <property type="match status" value="1"/>
</dbReference>
<dbReference type="SUPFAM" id="SSF50129">
    <property type="entry name" value="GroES-like"/>
    <property type="match status" value="1"/>
</dbReference>
<dbReference type="PROSITE" id="PS00681">
    <property type="entry name" value="CHAPERONINS_CPN10"/>
    <property type="match status" value="1"/>
</dbReference>
<sequence>MNIRPLGDRVVIKRVEAEETTKSGIVLPGAAKEKPQVAEVIAVGPGGLVDGKEVKMELKVGDKVLFSKYAGNEVKIEGEEVTILKQDDILAVVEG</sequence>
<name>CH10_CLOBH</name>
<organism>
    <name type="scientific">Clostridium botulinum (strain Hall / ATCC 3502 / NCTC 13319 / Type A)</name>
    <dbReference type="NCBI Taxonomy" id="441771"/>
    <lineage>
        <taxon>Bacteria</taxon>
        <taxon>Bacillati</taxon>
        <taxon>Bacillota</taxon>
        <taxon>Clostridia</taxon>
        <taxon>Eubacteriales</taxon>
        <taxon>Clostridiaceae</taxon>
        <taxon>Clostridium</taxon>
    </lineage>
</organism>
<keyword id="KW-0143">Chaperone</keyword>
<keyword id="KW-0963">Cytoplasm</keyword>
<keyword id="KW-1185">Reference proteome</keyword>
<proteinExistence type="inferred from homology"/>
<accession>A5I724</accession>
<accession>A7G8A8</accession>
<feature type="chain" id="PRO_1000025237" description="Co-chaperonin GroES">
    <location>
        <begin position="1"/>
        <end position="95"/>
    </location>
</feature>
<evidence type="ECO:0000255" key="1">
    <source>
        <dbReference type="HAMAP-Rule" id="MF_00580"/>
    </source>
</evidence>